<protein>
    <recommendedName>
        <fullName evidence="1">Small COPII coat GTPase SAR1A</fullName>
        <ecNumber evidence="1">3.6.5.2</ecNumber>
    </recommendedName>
</protein>
<accession>O04834</accession>
<accession>O04747</accession>
<accession>O04748</accession>
<accession>O04835</accession>
<accession>Q42142</accession>
<accession>Q96296</accession>
<comment type="function">
    <text evidence="1">Small GTPase that cycles between an active GTP-bound and an inactive GDP-bound state and mainly functions in vesicle-mediated endoplasmic reticulum (ER) to Golgi transport. The active GTP-bound form inserts into the endoplasmic reticulum membrane where it recruits the remainder of the coat protein complex II/COPII. The coat protein complex II assembling and polymerizing on endoplasmic reticulum membrane is responsible for both the sorting of cargos and the deformation and budding of membranes into vesicles destined to the Golgi.</text>
</comment>
<comment type="catalytic activity">
    <reaction evidence="1">
        <text>GTP + H2O = GDP + phosphate + H(+)</text>
        <dbReference type="Rhea" id="RHEA:19669"/>
        <dbReference type="ChEBI" id="CHEBI:15377"/>
        <dbReference type="ChEBI" id="CHEBI:15378"/>
        <dbReference type="ChEBI" id="CHEBI:37565"/>
        <dbReference type="ChEBI" id="CHEBI:43474"/>
        <dbReference type="ChEBI" id="CHEBI:58189"/>
        <dbReference type="EC" id="3.6.5.2"/>
    </reaction>
    <physiologicalReaction direction="left-to-right" evidence="1">
        <dbReference type="Rhea" id="RHEA:19670"/>
    </physiologicalReaction>
</comment>
<comment type="activity regulation">
    <text evidence="1">Small GTPases activation is mediated by guanine exchange factors (GEF), while inactivation through hydrolysis of the bound GTP is stimulated by GTPase activating proteins (GAP).</text>
</comment>
<comment type="subunit">
    <text evidence="1">Homodimer; upon association with membrane. Part of the coat protein complex II/COPII, composed of SEC23/24 and SEC13/31 heterodimers, that it helps recruit and assemble on endoplasmic reticulum (ER) membranes at ER exit sites.</text>
</comment>
<comment type="subcellular location">
    <subcellularLocation>
        <location evidence="1">Endoplasmic reticulum membrane</location>
        <topology evidence="1">Peripheral membrane protein</topology>
    </subcellularLocation>
    <subcellularLocation>
        <location evidence="1">Golgi apparatus</location>
        <location evidence="1">Golgi stack membrane</location>
        <topology evidence="1">Peripheral membrane protein</topology>
    </subcellularLocation>
    <subcellularLocation>
        <location evidence="1">Cytoplasm</location>
        <location evidence="1">Cytosol</location>
    </subcellularLocation>
    <text evidence="1">Active at endoplasmic reticulum exit sites (ERES) where it inserts into the membrane and recruits the remainder of the coat protein complex II/COPII.</text>
</comment>
<comment type="similarity">
    <text evidence="4">Belongs to the small GTPase superfamily. SAR1 family.</text>
</comment>
<proteinExistence type="evidence at transcript level"/>
<organism>
    <name type="scientific">Arabidopsis thaliana</name>
    <name type="common">Mouse-ear cress</name>
    <dbReference type="NCBI Taxonomy" id="3702"/>
    <lineage>
        <taxon>Eukaryota</taxon>
        <taxon>Viridiplantae</taxon>
        <taxon>Streptophyta</taxon>
        <taxon>Embryophyta</taxon>
        <taxon>Tracheophyta</taxon>
        <taxon>Spermatophyta</taxon>
        <taxon>Magnoliopsida</taxon>
        <taxon>eudicotyledons</taxon>
        <taxon>Gunneridae</taxon>
        <taxon>Pentapetalae</taxon>
        <taxon>rosids</taxon>
        <taxon>malvids</taxon>
        <taxon>Brassicales</taxon>
        <taxon>Brassicaceae</taxon>
        <taxon>Camelineae</taxon>
        <taxon>Arabidopsis</taxon>
    </lineage>
</organism>
<feature type="chain" id="PRO_0000206265" description="Small COPII coat GTPase SAR1A">
    <location>
        <begin position="1"/>
        <end position="193"/>
    </location>
</feature>
<feature type="region of interest" description="Mediates recruitment to ER membranes" evidence="2">
    <location>
        <begin position="10"/>
        <end position="14"/>
    </location>
</feature>
<feature type="short sequence motif" description="STAR; SAR1-N-terminal activation recruitment. Required for the activation and subsequent recruitment to ER membrane" evidence="2">
    <location>
        <begin position="2"/>
        <end position="4"/>
    </location>
</feature>
<feature type="binding site" evidence="1">
    <location>
        <position position="29"/>
    </location>
    <ligand>
        <name>Mg(2+)</name>
        <dbReference type="ChEBI" id="CHEBI:18420"/>
    </ligand>
</feature>
<feature type="binding site" evidence="1">
    <location>
        <position position="30"/>
    </location>
    <ligand>
        <name>GDP</name>
        <dbReference type="ChEBI" id="CHEBI:58189"/>
    </ligand>
</feature>
<feature type="binding site" evidence="3">
    <location>
        <position position="30"/>
    </location>
    <ligand>
        <name>GTP</name>
        <dbReference type="ChEBI" id="CHEBI:37565"/>
    </ligand>
</feature>
<feature type="binding site" evidence="1">
    <location>
        <position position="31"/>
    </location>
    <ligand>
        <name>GDP</name>
        <dbReference type="ChEBI" id="CHEBI:58189"/>
    </ligand>
</feature>
<feature type="binding site" evidence="1">
    <location>
        <position position="32"/>
    </location>
    <ligand>
        <name>GDP</name>
        <dbReference type="ChEBI" id="CHEBI:58189"/>
    </ligand>
</feature>
<feature type="binding site" evidence="3">
    <location>
        <position position="32"/>
    </location>
    <ligand>
        <name>GTP</name>
        <dbReference type="ChEBI" id="CHEBI:37565"/>
    </ligand>
</feature>
<feature type="binding site" evidence="1">
    <location>
        <position position="33"/>
    </location>
    <ligand>
        <name>GDP</name>
        <dbReference type="ChEBI" id="CHEBI:58189"/>
    </ligand>
</feature>
<feature type="binding site" evidence="3">
    <location>
        <position position="33"/>
    </location>
    <ligand>
        <name>GTP</name>
        <dbReference type="ChEBI" id="CHEBI:37565"/>
    </ligand>
</feature>
<feature type="binding site" evidence="1">
    <location>
        <position position="34"/>
    </location>
    <ligand>
        <name>GDP</name>
        <dbReference type="ChEBI" id="CHEBI:58189"/>
    </ligand>
</feature>
<feature type="binding site" evidence="3">
    <location>
        <position position="34"/>
    </location>
    <ligand>
        <name>GTP</name>
        <dbReference type="ChEBI" id="CHEBI:37565"/>
    </ligand>
</feature>
<feature type="binding site" evidence="1">
    <location>
        <position position="35"/>
    </location>
    <ligand>
        <name>GDP</name>
        <dbReference type="ChEBI" id="CHEBI:58189"/>
    </ligand>
</feature>
<feature type="binding site" evidence="3">
    <location>
        <position position="35"/>
    </location>
    <ligand>
        <name>GTP</name>
        <dbReference type="ChEBI" id="CHEBI:37565"/>
    </ligand>
</feature>
<feature type="binding site" evidence="1">
    <location>
        <position position="70"/>
    </location>
    <ligand>
        <name>Mg(2+)</name>
        <dbReference type="ChEBI" id="CHEBI:18420"/>
    </ligand>
</feature>
<feature type="binding site" evidence="1">
    <location>
        <position position="129"/>
    </location>
    <ligand>
        <name>GDP</name>
        <dbReference type="ChEBI" id="CHEBI:58189"/>
    </ligand>
</feature>
<feature type="binding site" evidence="3">
    <location>
        <position position="129"/>
    </location>
    <ligand>
        <name>GTP</name>
        <dbReference type="ChEBI" id="CHEBI:37565"/>
    </ligand>
</feature>
<feature type="binding site" evidence="1">
    <location>
        <position position="130"/>
    </location>
    <ligand>
        <name>GDP</name>
        <dbReference type="ChEBI" id="CHEBI:58189"/>
    </ligand>
</feature>
<feature type="binding site" evidence="3">
    <location>
        <position position="130"/>
    </location>
    <ligand>
        <name>GTP</name>
        <dbReference type="ChEBI" id="CHEBI:37565"/>
    </ligand>
</feature>
<feature type="binding site" evidence="1">
    <location>
        <position position="132"/>
    </location>
    <ligand>
        <name>GDP</name>
        <dbReference type="ChEBI" id="CHEBI:58189"/>
    </ligand>
</feature>
<feature type="binding site" evidence="3">
    <location>
        <position position="132"/>
    </location>
    <ligand>
        <name>GTP</name>
        <dbReference type="ChEBI" id="CHEBI:37565"/>
    </ligand>
</feature>
<feature type="binding site" evidence="1">
    <location>
        <position position="175"/>
    </location>
    <ligand>
        <name>GDP</name>
        <dbReference type="ChEBI" id="CHEBI:58189"/>
    </ligand>
</feature>
<feature type="binding site" evidence="3">
    <location>
        <position position="175"/>
    </location>
    <ligand>
        <name>GTP</name>
        <dbReference type="ChEBI" id="CHEBI:37565"/>
    </ligand>
</feature>
<name>SAR1A_ARATH</name>
<evidence type="ECO:0000250" key="1">
    <source>
        <dbReference type="UniProtKB" id="Q9NR31"/>
    </source>
</evidence>
<evidence type="ECO:0000250" key="2">
    <source>
        <dbReference type="UniProtKB" id="Q9QVY3"/>
    </source>
</evidence>
<evidence type="ECO:0000250" key="3">
    <source>
        <dbReference type="UniProtKB" id="Q9Y6B6"/>
    </source>
</evidence>
<evidence type="ECO:0000305" key="4"/>
<dbReference type="EC" id="3.6.5.2" evidence="1"/>
<dbReference type="EMBL" id="U56929">
    <property type="protein sequence ID" value="AAA99827.1"/>
    <property type="molecule type" value="mRNA"/>
</dbReference>
<dbReference type="EMBL" id="AF001308">
    <property type="protein sequence ID" value="AAC78700.1"/>
    <property type="molecule type" value="Genomic_DNA"/>
</dbReference>
<dbReference type="EMBL" id="AL161493">
    <property type="protein sequence ID" value="CAB80701.1"/>
    <property type="molecule type" value="Genomic_DNA"/>
</dbReference>
<dbReference type="EMBL" id="CP002687">
    <property type="protein sequence ID" value="AEE82122.1"/>
    <property type="molecule type" value="Genomic_DNA"/>
</dbReference>
<dbReference type="EMBL" id="AF001535">
    <property type="protein sequence ID" value="AAB57799.1"/>
    <property type="molecule type" value="Genomic_DNA"/>
</dbReference>
<dbReference type="EMBL" id="AY065357">
    <property type="protein sequence ID" value="AAL38798.1"/>
    <property type="molecule type" value="mRNA"/>
</dbReference>
<dbReference type="EMBL" id="AY096699">
    <property type="protein sequence ID" value="AAM20333.1"/>
    <property type="molecule type" value="mRNA"/>
</dbReference>
<dbReference type="EMBL" id="AY088765">
    <property type="protein sequence ID" value="AAM67080.1"/>
    <property type="molecule type" value="mRNA"/>
</dbReference>
<dbReference type="EMBL" id="Z26707">
    <property type="protein sequence ID" value="CAA81406.1"/>
    <property type="molecule type" value="mRNA"/>
</dbReference>
<dbReference type="PIR" id="T01509">
    <property type="entry name" value="T01509"/>
</dbReference>
<dbReference type="SMR" id="O04834"/>
<dbReference type="BioGRID" id="12661">
    <property type="interactions" value="15"/>
</dbReference>
<dbReference type="FunCoup" id="O04834">
    <property type="interactions" value="4377"/>
</dbReference>
<dbReference type="IntAct" id="O04834">
    <property type="interactions" value="14"/>
</dbReference>
<dbReference type="STRING" id="3702.O04834"/>
<dbReference type="iPTMnet" id="O04834"/>
<dbReference type="PaxDb" id="3702-AT4G02080.1"/>
<dbReference type="ProteomicsDB" id="226687"/>
<dbReference type="EnsemblPlants" id="AT4G02080.1">
    <property type="protein sequence ID" value="AT4G02080.1"/>
    <property type="gene ID" value="AT4G02080"/>
</dbReference>
<dbReference type="GeneID" id="827368"/>
<dbReference type="Gramene" id="AT4G02080.1">
    <property type="protein sequence ID" value="AT4G02080.1"/>
    <property type="gene ID" value="AT4G02080"/>
</dbReference>
<dbReference type="KEGG" id="ath:AT4G02080"/>
<dbReference type="Araport" id="AT4G02080"/>
<dbReference type="TAIR" id="AT4G02080">
    <property type="gene designation" value="SAR2"/>
</dbReference>
<dbReference type="eggNOG" id="KOG0077">
    <property type="taxonomic scope" value="Eukaryota"/>
</dbReference>
<dbReference type="HOGENOM" id="CLU_040729_6_0_1"/>
<dbReference type="InParanoid" id="O04834"/>
<dbReference type="OrthoDB" id="2011769at2759"/>
<dbReference type="PhylomeDB" id="O04834"/>
<dbReference type="PRO" id="PR:O04834"/>
<dbReference type="Proteomes" id="UP000006548">
    <property type="component" value="Chromosome 4"/>
</dbReference>
<dbReference type="ExpressionAtlas" id="O04834">
    <property type="expression patterns" value="baseline and differential"/>
</dbReference>
<dbReference type="GO" id="GO:0005789">
    <property type="term" value="C:endoplasmic reticulum membrane"/>
    <property type="evidence" value="ECO:0007669"/>
    <property type="project" value="UniProtKB-SubCell"/>
</dbReference>
<dbReference type="GO" id="GO:0032580">
    <property type="term" value="C:Golgi cisterna membrane"/>
    <property type="evidence" value="ECO:0007669"/>
    <property type="project" value="UniProtKB-SubCell"/>
</dbReference>
<dbReference type="GO" id="GO:0005886">
    <property type="term" value="C:plasma membrane"/>
    <property type="evidence" value="ECO:0007005"/>
    <property type="project" value="TAIR"/>
</dbReference>
<dbReference type="GO" id="GO:0005525">
    <property type="term" value="F:GTP binding"/>
    <property type="evidence" value="ECO:0000250"/>
    <property type="project" value="TAIR"/>
</dbReference>
<dbReference type="GO" id="GO:0003924">
    <property type="term" value="F:GTPase activity"/>
    <property type="evidence" value="ECO:0007669"/>
    <property type="project" value="InterPro"/>
</dbReference>
<dbReference type="GO" id="GO:0046872">
    <property type="term" value="F:metal ion binding"/>
    <property type="evidence" value="ECO:0007669"/>
    <property type="project" value="UniProtKB-KW"/>
</dbReference>
<dbReference type="GO" id="GO:0006886">
    <property type="term" value="P:intracellular protein transport"/>
    <property type="evidence" value="ECO:0007669"/>
    <property type="project" value="InterPro"/>
</dbReference>
<dbReference type="GO" id="GO:0009555">
    <property type="term" value="P:pollen development"/>
    <property type="evidence" value="ECO:0000316"/>
    <property type="project" value="TAIR"/>
</dbReference>
<dbReference type="GO" id="GO:0016192">
    <property type="term" value="P:vesicle-mediated transport"/>
    <property type="evidence" value="ECO:0007669"/>
    <property type="project" value="UniProtKB-KW"/>
</dbReference>
<dbReference type="CDD" id="cd00879">
    <property type="entry name" value="Sar1"/>
    <property type="match status" value="1"/>
</dbReference>
<dbReference type="FunFam" id="3.40.50.300:FF:000261">
    <property type="entry name" value="GTP-binding protein SAR1A"/>
    <property type="match status" value="1"/>
</dbReference>
<dbReference type="Gene3D" id="3.40.50.300">
    <property type="entry name" value="P-loop containing nucleotide triphosphate hydrolases"/>
    <property type="match status" value="1"/>
</dbReference>
<dbReference type="InterPro" id="IPR027417">
    <property type="entry name" value="P-loop_NTPase"/>
</dbReference>
<dbReference type="InterPro" id="IPR005225">
    <property type="entry name" value="Small_GTP-bd"/>
</dbReference>
<dbReference type="InterPro" id="IPR006689">
    <property type="entry name" value="Small_GTPase_ARF/SAR"/>
</dbReference>
<dbReference type="InterPro" id="IPR006687">
    <property type="entry name" value="Small_GTPase_SAR1"/>
</dbReference>
<dbReference type="NCBIfam" id="TIGR00231">
    <property type="entry name" value="small_GTP"/>
    <property type="match status" value="1"/>
</dbReference>
<dbReference type="PANTHER" id="PTHR45684">
    <property type="entry name" value="RE74312P"/>
    <property type="match status" value="1"/>
</dbReference>
<dbReference type="Pfam" id="PF00025">
    <property type="entry name" value="Arf"/>
    <property type="match status" value="1"/>
</dbReference>
<dbReference type="PRINTS" id="PR00328">
    <property type="entry name" value="SAR1GTPBP"/>
</dbReference>
<dbReference type="SMART" id="SM00177">
    <property type="entry name" value="ARF"/>
    <property type="match status" value="1"/>
</dbReference>
<dbReference type="SMART" id="SM00178">
    <property type="entry name" value="SAR"/>
    <property type="match status" value="1"/>
</dbReference>
<dbReference type="SUPFAM" id="SSF52540">
    <property type="entry name" value="P-loop containing nucleoside triphosphate hydrolases"/>
    <property type="match status" value="1"/>
</dbReference>
<dbReference type="PROSITE" id="PS51422">
    <property type="entry name" value="SAR1"/>
    <property type="match status" value="1"/>
</dbReference>
<sequence length="193" mass="22030">MFMIDWFYGVLASLGLWQKEAKILFLGLDNAGKTTLLHMLKDERLVQHQPTQHPTSEELSIGKIKFKAFDLGGHQIARRVWKDYYAKVDAVVYLVDAYDKERFAESKKELDALLSDESLASVPFLILGNKIDIPYAASEDELRYHLGLSNFTTGKGKVNLTDSNVRPLEVFMCSIVRKMGYGEGFKWVSQYIK</sequence>
<gene>
    <name type="primary">SAR1A</name>
    <name type="ordered locus">At4g02080</name>
    <name type="ORF">AGAA.4</name>
    <name type="ORF">T10M13.9</name>
</gene>
<reference key="1">
    <citation type="submission" date="1996-08" db="EMBL/GenBank/DDBJ databases">
        <authorList>
            <person name="Winge P."/>
            <person name="Brembu T."/>
            <person name="Bones A.M."/>
        </authorList>
    </citation>
    <scope>NUCLEOTIDE SEQUENCE</scope>
    <source>
        <strain>cv. Columbia</strain>
    </source>
</reference>
<reference key="2">
    <citation type="journal article" date="1999" name="Nature">
        <title>Sequence and analysis of chromosome 4 of the plant Arabidopsis thaliana.</title>
        <authorList>
            <person name="Mayer K.F.X."/>
            <person name="Schueller C."/>
            <person name="Wambutt R."/>
            <person name="Murphy G."/>
            <person name="Volckaert G."/>
            <person name="Pohl T."/>
            <person name="Duesterhoeft A."/>
            <person name="Stiekema W."/>
            <person name="Entian K.-D."/>
            <person name="Terryn N."/>
            <person name="Harris B."/>
            <person name="Ansorge W."/>
            <person name="Brandt P."/>
            <person name="Grivell L.A."/>
            <person name="Rieger M."/>
            <person name="Weichselgartner M."/>
            <person name="de Simone V."/>
            <person name="Obermaier B."/>
            <person name="Mache R."/>
            <person name="Mueller M."/>
            <person name="Kreis M."/>
            <person name="Delseny M."/>
            <person name="Puigdomenech P."/>
            <person name="Watson M."/>
            <person name="Schmidtheini T."/>
            <person name="Reichert B."/>
            <person name="Portetelle D."/>
            <person name="Perez-Alonso M."/>
            <person name="Boutry M."/>
            <person name="Bancroft I."/>
            <person name="Vos P."/>
            <person name="Hoheisel J."/>
            <person name="Zimmermann W."/>
            <person name="Wedler H."/>
            <person name="Ridley P."/>
            <person name="Langham S.-A."/>
            <person name="McCullagh B."/>
            <person name="Bilham L."/>
            <person name="Robben J."/>
            <person name="van der Schueren J."/>
            <person name="Grymonprez B."/>
            <person name="Chuang Y.-J."/>
            <person name="Vandenbussche F."/>
            <person name="Braeken M."/>
            <person name="Weltjens I."/>
            <person name="Voet M."/>
            <person name="Bastiaens I."/>
            <person name="Aert R."/>
            <person name="Defoor E."/>
            <person name="Weitzenegger T."/>
            <person name="Bothe G."/>
            <person name="Ramsperger U."/>
            <person name="Hilbert H."/>
            <person name="Braun M."/>
            <person name="Holzer E."/>
            <person name="Brandt A."/>
            <person name="Peters S."/>
            <person name="van Staveren M."/>
            <person name="Dirkse W."/>
            <person name="Mooijman P."/>
            <person name="Klein Lankhorst R."/>
            <person name="Rose M."/>
            <person name="Hauf J."/>
            <person name="Koetter P."/>
            <person name="Berneiser S."/>
            <person name="Hempel S."/>
            <person name="Feldpausch M."/>
            <person name="Lamberth S."/>
            <person name="Van den Daele H."/>
            <person name="De Keyser A."/>
            <person name="Buysshaert C."/>
            <person name="Gielen J."/>
            <person name="Villarroel R."/>
            <person name="De Clercq R."/>
            <person name="van Montagu M."/>
            <person name="Rogers J."/>
            <person name="Cronin A."/>
            <person name="Quail M.A."/>
            <person name="Bray-Allen S."/>
            <person name="Clark L."/>
            <person name="Doggett J."/>
            <person name="Hall S."/>
            <person name="Kay M."/>
            <person name="Lennard N."/>
            <person name="McLay K."/>
            <person name="Mayes R."/>
            <person name="Pettett A."/>
            <person name="Rajandream M.A."/>
            <person name="Lyne M."/>
            <person name="Benes V."/>
            <person name="Rechmann S."/>
            <person name="Borkova D."/>
            <person name="Bloecker H."/>
            <person name="Scharfe M."/>
            <person name="Grimm M."/>
            <person name="Loehnert T.-H."/>
            <person name="Dose S."/>
            <person name="de Haan M."/>
            <person name="Maarse A.C."/>
            <person name="Schaefer M."/>
            <person name="Mueller-Auer S."/>
            <person name="Gabel C."/>
            <person name="Fuchs M."/>
            <person name="Fartmann B."/>
            <person name="Granderath K."/>
            <person name="Dauner D."/>
            <person name="Herzl A."/>
            <person name="Neumann S."/>
            <person name="Argiriou A."/>
            <person name="Vitale D."/>
            <person name="Liguori R."/>
            <person name="Piravandi E."/>
            <person name="Massenet O."/>
            <person name="Quigley F."/>
            <person name="Clabauld G."/>
            <person name="Muendlein A."/>
            <person name="Felber R."/>
            <person name="Schnabl S."/>
            <person name="Hiller R."/>
            <person name="Schmidt W."/>
            <person name="Lecharny A."/>
            <person name="Aubourg S."/>
            <person name="Chefdor F."/>
            <person name="Cooke R."/>
            <person name="Berger C."/>
            <person name="Monfort A."/>
            <person name="Casacuberta E."/>
            <person name="Gibbons T."/>
            <person name="Weber N."/>
            <person name="Vandenbol M."/>
            <person name="Bargues M."/>
            <person name="Terol J."/>
            <person name="Torres A."/>
            <person name="Perez-Perez A."/>
            <person name="Purnelle B."/>
            <person name="Bent E."/>
            <person name="Johnson S."/>
            <person name="Tacon D."/>
            <person name="Jesse T."/>
            <person name="Heijnen L."/>
            <person name="Schwarz S."/>
            <person name="Scholler P."/>
            <person name="Heber S."/>
            <person name="Francs P."/>
            <person name="Bielke C."/>
            <person name="Frishman D."/>
            <person name="Haase D."/>
            <person name="Lemcke K."/>
            <person name="Mewes H.-W."/>
            <person name="Stocker S."/>
            <person name="Zaccaria P."/>
            <person name="Bevan M."/>
            <person name="Wilson R.K."/>
            <person name="de la Bastide M."/>
            <person name="Habermann K."/>
            <person name="Parnell L."/>
            <person name="Dedhia N."/>
            <person name="Gnoj L."/>
            <person name="Schutz K."/>
            <person name="Huang E."/>
            <person name="Spiegel L."/>
            <person name="Sekhon M."/>
            <person name="Murray J."/>
            <person name="Sheet P."/>
            <person name="Cordes M."/>
            <person name="Abu-Threideh J."/>
            <person name="Stoneking T."/>
            <person name="Kalicki J."/>
            <person name="Graves T."/>
            <person name="Harmon G."/>
            <person name="Edwards J."/>
            <person name="Latreille P."/>
            <person name="Courtney L."/>
            <person name="Cloud J."/>
            <person name="Abbott A."/>
            <person name="Scott K."/>
            <person name="Johnson D."/>
            <person name="Minx P."/>
            <person name="Bentley D."/>
            <person name="Fulton B."/>
            <person name="Miller N."/>
            <person name="Greco T."/>
            <person name="Kemp K."/>
            <person name="Kramer J."/>
            <person name="Fulton L."/>
            <person name="Mardis E."/>
            <person name="Dante M."/>
            <person name="Pepin K."/>
            <person name="Hillier L.W."/>
            <person name="Nelson J."/>
            <person name="Spieth J."/>
            <person name="Ryan E."/>
            <person name="Andrews S."/>
            <person name="Geisel C."/>
            <person name="Layman D."/>
            <person name="Du H."/>
            <person name="Ali J."/>
            <person name="Berghoff A."/>
            <person name="Jones K."/>
            <person name="Drone K."/>
            <person name="Cotton M."/>
            <person name="Joshu C."/>
            <person name="Antonoiu B."/>
            <person name="Zidanic M."/>
            <person name="Strong C."/>
            <person name="Sun H."/>
            <person name="Lamar B."/>
            <person name="Yordan C."/>
            <person name="Ma P."/>
            <person name="Zhong J."/>
            <person name="Preston R."/>
            <person name="Vil D."/>
            <person name="Shekher M."/>
            <person name="Matero A."/>
            <person name="Shah R."/>
            <person name="Swaby I.K."/>
            <person name="O'Shaughnessy A."/>
            <person name="Rodriguez M."/>
            <person name="Hoffman J."/>
            <person name="Till S."/>
            <person name="Granat S."/>
            <person name="Shohdy N."/>
            <person name="Hasegawa A."/>
            <person name="Hameed A."/>
            <person name="Lodhi M."/>
            <person name="Johnson A."/>
            <person name="Chen E."/>
            <person name="Marra M.A."/>
            <person name="Martienssen R."/>
            <person name="McCombie W.R."/>
        </authorList>
    </citation>
    <scope>NUCLEOTIDE SEQUENCE [LARGE SCALE GENOMIC DNA]</scope>
    <source>
        <strain>cv. Columbia</strain>
    </source>
</reference>
<reference key="3">
    <citation type="journal article" date="2017" name="Plant J.">
        <title>Araport11: a complete reannotation of the Arabidopsis thaliana reference genome.</title>
        <authorList>
            <person name="Cheng C.Y."/>
            <person name="Krishnakumar V."/>
            <person name="Chan A.P."/>
            <person name="Thibaud-Nissen F."/>
            <person name="Schobel S."/>
            <person name="Town C.D."/>
        </authorList>
    </citation>
    <scope>GENOME REANNOTATION</scope>
    <source>
        <strain>cv. Columbia</strain>
    </source>
</reference>
<reference key="4">
    <citation type="submission" date="1997-04" db="EMBL/GenBank/DDBJ databases">
        <authorList>
            <person name="Till S."/>
            <person name="Granat S."/>
            <person name="Parnell L."/>
            <person name="Kaplan N."/>
            <person name="Hoffman J."/>
            <person name="Lodhi M."/>
            <person name="Johnson A.F."/>
            <person name="Dedhia N."/>
            <person name="Martienssen R."/>
            <person name="McCombie W.R."/>
        </authorList>
    </citation>
    <scope>NUCLEOTIDE SEQUENCE</scope>
    <source>
        <strain>cv. Landsberg erecta</strain>
    </source>
</reference>
<reference key="5">
    <citation type="journal article" date="2003" name="Science">
        <title>Empirical analysis of transcriptional activity in the Arabidopsis genome.</title>
        <authorList>
            <person name="Yamada K."/>
            <person name="Lim J."/>
            <person name="Dale J.M."/>
            <person name="Chen H."/>
            <person name="Shinn P."/>
            <person name="Palm C.J."/>
            <person name="Southwick A.M."/>
            <person name="Wu H.C."/>
            <person name="Kim C.J."/>
            <person name="Nguyen M."/>
            <person name="Pham P.K."/>
            <person name="Cheuk R.F."/>
            <person name="Karlin-Newmann G."/>
            <person name="Liu S.X."/>
            <person name="Lam B."/>
            <person name="Sakano H."/>
            <person name="Wu T."/>
            <person name="Yu G."/>
            <person name="Miranda M."/>
            <person name="Quach H.L."/>
            <person name="Tripp M."/>
            <person name="Chang C.H."/>
            <person name="Lee J.M."/>
            <person name="Toriumi M.J."/>
            <person name="Chan M.M."/>
            <person name="Tang C.C."/>
            <person name="Onodera C.S."/>
            <person name="Deng J.M."/>
            <person name="Akiyama K."/>
            <person name="Ansari Y."/>
            <person name="Arakawa T."/>
            <person name="Banh J."/>
            <person name="Banno F."/>
            <person name="Bowser L."/>
            <person name="Brooks S.Y."/>
            <person name="Carninci P."/>
            <person name="Chao Q."/>
            <person name="Choy N."/>
            <person name="Enju A."/>
            <person name="Goldsmith A.D."/>
            <person name="Gurjal M."/>
            <person name="Hansen N.F."/>
            <person name="Hayashizaki Y."/>
            <person name="Johnson-Hopson C."/>
            <person name="Hsuan V.W."/>
            <person name="Iida K."/>
            <person name="Karnes M."/>
            <person name="Khan S."/>
            <person name="Koesema E."/>
            <person name="Ishida J."/>
            <person name="Jiang P.X."/>
            <person name="Jones T."/>
            <person name="Kawai J."/>
            <person name="Kamiya A."/>
            <person name="Meyers C."/>
            <person name="Nakajima M."/>
            <person name="Narusaka M."/>
            <person name="Seki M."/>
            <person name="Sakurai T."/>
            <person name="Satou M."/>
            <person name="Tamse R."/>
            <person name="Vaysberg M."/>
            <person name="Wallender E.K."/>
            <person name="Wong C."/>
            <person name="Yamamura Y."/>
            <person name="Yuan S."/>
            <person name="Shinozaki K."/>
            <person name="Davis R.W."/>
            <person name="Theologis A."/>
            <person name="Ecker J.R."/>
        </authorList>
    </citation>
    <scope>NUCLEOTIDE SEQUENCE [LARGE SCALE MRNA]</scope>
    <source>
        <strain>cv. Columbia</strain>
    </source>
</reference>
<reference key="6">
    <citation type="submission" date="2002-03" db="EMBL/GenBank/DDBJ databases">
        <title>Full-length cDNA from Arabidopsis thaliana.</title>
        <authorList>
            <person name="Brover V.V."/>
            <person name="Troukhan M.E."/>
            <person name="Alexandrov N.A."/>
            <person name="Lu Y.-P."/>
            <person name="Flavell R.B."/>
            <person name="Feldmann K.A."/>
        </authorList>
    </citation>
    <scope>NUCLEOTIDE SEQUENCE [LARGE SCALE MRNA]</scope>
</reference>
<reference key="7">
    <citation type="journal article" date="1996" name="Plant J.">
        <title>Further progress towards a catalogue of all Arabidopsis genes: analysis of a set of 5000 non-redundant ESTs.</title>
        <authorList>
            <person name="Cooke R."/>
            <person name="Raynal M."/>
            <person name="Laudie M."/>
            <person name="Grellet F."/>
            <person name="Delseny M."/>
            <person name="Morris P.-C."/>
            <person name="Guerrier D."/>
            <person name="Giraudat J."/>
            <person name="Quigley F."/>
            <person name="Clabault G."/>
            <person name="Li Y.-F."/>
            <person name="Mache R."/>
            <person name="Krivitzky M."/>
            <person name="Gy I.J.-J."/>
            <person name="Kreis M."/>
            <person name="Lecharny A."/>
            <person name="Parmentier Y."/>
            <person name="Marbach J."/>
            <person name="Fleck J."/>
            <person name="Clement B."/>
            <person name="Philipps G."/>
            <person name="Herve C."/>
            <person name="Bardet C."/>
            <person name="Tremousaygue D."/>
            <person name="Lescure B."/>
            <person name="Lacomme C."/>
            <person name="Roby D."/>
            <person name="Jourjon M.-F."/>
            <person name="Chabrier P."/>
            <person name="Charpenteau J.-L."/>
            <person name="Desprez T."/>
            <person name="Amselem J."/>
            <person name="Chiapello H."/>
            <person name="Hoefte H."/>
        </authorList>
    </citation>
    <scope>NUCLEOTIDE SEQUENCE [LARGE SCALE MRNA] OF 104-193</scope>
    <source>
        <strain>cv. Columbia</strain>
        <tissue>Seedling</tissue>
    </source>
</reference>
<keyword id="KW-0963">Cytoplasm</keyword>
<keyword id="KW-0256">Endoplasmic reticulum</keyword>
<keyword id="KW-0931">ER-Golgi transport</keyword>
<keyword id="KW-0333">Golgi apparatus</keyword>
<keyword id="KW-0342">GTP-binding</keyword>
<keyword id="KW-0378">Hydrolase</keyword>
<keyword id="KW-0460">Magnesium</keyword>
<keyword id="KW-0472">Membrane</keyword>
<keyword id="KW-0479">Metal-binding</keyword>
<keyword id="KW-0547">Nucleotide-binding</keyword>
<keyword id="KW-0653">Protein transport</keyword>
<keyword id="KW-1185">Reference proteome</keyword>
<keyword id="KW-0813">Transport</keyword>